<comment type="function">
    <text evidence="1">Bacterial hemolysins are exotoxins that attack blood cell membranes and cause cell rupture. Binds to eukaryotic membranes where it hydrolyzes phosphatidylcholine, sphingomyelin and phosphatidylethanolamine. The diacylglycerol produced can activate both the arachidonic acid pathway, leading to modulation of the inflammatory response cascade and thrombosis, and protein kinase C, leading to activation of eukaryotic phospholipases and further membrane damage (By similarity). This enzyme is hemolytic against horse erythrocytes.</text>
</comment>
<comment type="catalytic activity">
    <reaction>
        <text>a 1,2-diacyl-sn-glycero-3-phosphocholine + H2O = phosphocholine + a 1,2-diacyl-sn-glycerol + H(+)</text>
        <dbReference type="Rhea" id="RHEA:10604"/>
        <dbReference type="ChEBI" id="CHEBI:15377"/>
        <dbReference type="ChEBI" id="CHEBI:15378"/>
        <dbReference type="ChEBI" id="CHEBI:17815"/>
        <dbReference type="ChEBI" id="CHEBI:57643"/>
        <dbReference type="ChEBI" id="CHEBI:295975"/>
        <dbReference type="EC" id="3.1.4.3"/>
    </reaction>
</comment>
<comment type="cofactor">
    <cofactor evidence="1">
        <name>Ca(2+)</name>
        <dbReference type="ChEBI" id="CHEBI:29108"/>
    </cofactor>
    <text evidence="1">Binds 3 Ca(2+) ions per subunit.</text>
</comment>
<comment type="cofactor">
    <cofactor evidence="3">
        <name>Zn(2+)</name>
        <dbReference type="ChEBI" id="CHEBI:29105"/>
    </cofactor>
    <text evidence="3">Binds 3 Zn(2+) ions per subunit.</text>
</comment>
<comment type="subcellular location">
    <subcellularLocation>
        <location evidence="3">Secreted</location>
    </subcellularLocation>
</comment>
<comment type="domain">
    <text>The protein is composed of 2 domains; the N-terminal domain contains the phospholipase C active site (PLC), in a cleft which is also occupied by the 3 zinc ions. The C-terminal domain is a putative phospholipid-recognition domain, which shows structural homology with phospholipid-binding C2-like domains from a range of eukaryotic proteins. The ability to bind membrane phospholipids in a Ca(2+) dependent manner and toxicity is conferred by this C-terminal domain, which also contributes to the sphingomyelinase activity.</text>
</comment>
<comment type="similarity">
    <text evidence="3">Belongs to the bacterial zinc-metallophospholipase C family.</text>
</comment>
<evidence type="ECO:0000250" key="1"/>
<evidence type="ECO:0000255" key="2">
    <source>
        <dbReference type="PROSITE-ProRule" id="PRU00152"/>
    </source>
</evidence>
<evidence type="ECO:0000255" key="3">
    <source>
        <dbReference type="PROSITE-ProRule" id="PRU00678"/>
    </source>
</evidence>
<gene>
    <name type="primary">plc</name>
</gene>
<name>PHLC_CLONO</name>
<keyword id="KW-0106">Calcium</keyword>
<keyword id="KW-0204">Cytolysis</keyword>
<keyword id="KW-0354">Hemolysis</keyword>
<keyword id="KW-0378">Hydrolase</keyword>
<keyword id="KW-0479">Metal-binding</keyword>
<keyword id="KW-0964">Secreted</keyword>
<keyword id="KW-0732">Signal</keyword>
<keyword id="KW-0800">Toxin</keyword>
<keyword id="KW-0843">Virulence</keyword>
<keyword id="KW-0862">Zinc</keyword>
<feature type="signal peptide" evidence="1">
    <location>
        <begin position="1"/>
        <end position="28"/>
    </location>
</feature>
<feature type="chain" id="PRO_0000023935" description="Phospholipase C">
    <location>
        <begin position="29"/>
        <end position="398"/>
    </location>
</feature>
<feature type="domain" description="Zn-dependent PLC" evidence="3">
    <location>
        <begin position="29"/>
        <end position="278"/>
    </location>
</feature>
<feature type="domain" description="PLAT" evidence="2">
    <location>
        <begin position="284"/>
        <end position="398"/>
    </location>
</feature>
<feature type="region of interest" description="Linker">
    <location>
        <begin position="275"/>
        <end position="283"/>
    </location>
</feature>
<feature type="binding site" evidence="3">
    <location>
        <position position="29"/>
    </location>
    <ligand>
        <name>Zn(2+)</name>
        <dbReference type="ChEBI" id="CHEBI:29105"/>
        <label>1</label>
    </ligand>
</feature>
<feature type="binding site" evidence="3">
    <location>
        <position position="39"/>
    </location>
    <ligand>
        <name>Zn(2+)</name>
        <dbReference type="ChEBI" id="CHEBI:29105"/>
        <label>1</label>
    </ligand>
</feature>
<feature type="binding site" evidence="3">
    <location>
        <position position="84"/>
    </location>
    <ligand>
        <name>Zn(2+)</name>
        <dbReference type="ChEBI" id="CHEBI:29105"/>
        <label>3</label>
    </ligand>
</feature>
<feature type="binding site" evidence="3">
    <location>
        <position position="96"/>
    </location>
    <ligand>
        <name>Zn(2+)</name>
        <dbReference type="ChEBI" id="CHEBI:29105"/>
        <label>3</label>
    </ligand>
</feature>
<feature type="binding site" evidence="3">
    <location>
        <position position="154"/>
    </location>
    <ligand>
        <name>Zn(2+)</name>
        <dbReference type="ChEBI" id="CHEBI:29105"/>
        <label>3</label>
    </ligand>
</feature>
<feature type="binding site" evidence="3">
    <location>
        <position position="158"/>
    </location>
    <ligand>
        <name>Zn(2+)</name>
        <dbReference type="ChEBI" id="CHEBI:29105"/>
        <label>1</label>
    </ligand>
</feature>
<feature type="binding site" evidence="3">
    <location>
        <position position="158"/>
    </location>
    <ligand>
        <name>Zn(2+)</name>
        <dbReference type="ChEBI" id="CHEBI:29105"/>
        <label>3</label>
    </ligand>
</feature>
<feature type="binding site" evidence="3">
    <location>
        <position position="164"/>
    </location>
    <ligand>
        <name>Zn(2+)</name>
        <dbReference type="ChEBI" id="CHEBI:29105"/>
        <label>2</label>
    </ligand>
</feature>
<feature type="binding site" evidence="3">
    <location>
        <position position="176"/>
    </location>
    <ligand>
        <name>Zn(2+)</name>
        <dbReference type="ChEBI" id="CHEBI:29105"/>
        <label>2</label>
    </ligand>
</feature>
<feature type="binding site" evidence="3">
    <location>
        <position position="180"/>
    </location>
    <ligand>
        <name>Zn(2+)</name>
        <dbReference type="ChEBI" id="CHEBI:29105"/>
        <label>2</label>
    </ligand>
</feature>
<feature type="binding site" evidence="1">
    <location>
        <position position="299"/>
    </location>
    <ligand>
        <name>Ca(2+)</name>
        <dbReference type="ChEBI" id="CHEBI:29108"/>
        <label>1</label>
    </ligand>
</feature>
<feature type="binding site" evidence="1">
    <location>
        <position position="300"/>
    </location>
    <ligand>
        <name>Ca(2+)</name>
        <dbReference type="ChEBI" id="CHEBI:29108"/>
        <label>3</label>
    </ligand>
</feature>
<feature type="binding site" evidence="1">
    <location>
        <position position="301"/>
    </location>
    <ligand>
        <name>Ca(2+)</name>
        <dbReference type="ChEBI" id="CHEBI:29108"/>
        <label>3</label>
    </ligand>
</feature>
<feature type="binding site" evidence="1">
    <location>
        <position position="321"/>
    </location>
    <ligand>
        <name>Ca(2+)</name>
        <dbReference type="ChEBI" id="CHEBI:29108"/>
        <label>2</label>
    </ligand>
</feature>
<feature type="binding site" evidence="1">
    <location>
        <position position="322"/>
    </location>
    <ligand>
        <name>Ca(2+)</name>
        <dbReference type="ChEBI" id="CHEBI:29108"/>
        <label>2</label>
    </ligand>
</feature>
<feature type="binding site" evidence="1">
    <location>
        <position position="324"/>
    </location>
    <ligand>
        <name>Ca(2+)</name>
        <dbReference type="ChEBI" id="CHEBI:29108"/>
        <label>2</label>
    </ligand>
</feature>
<feature type="binding site" evidence="1">
    <location>
        <position position="325"/>
    </location>
    <ligand>
        <name>Ca(2+)</name>
        <dbReference type="ChEBI" id="CHEBI:29108"/>
        <label>3</label>
    </ligand>
</feature>
<feature type="binding site" evidence="1">
    <location>
        <position position="326"/>
    </location>
    <ligand>
        <name>Ca(2+)</name>
        <dbReference type="ChEBI" id="CHEBI:29108"/>
        <label>2</label>
    </ligand>
</feature>
<feature type="binding site" evidence="1">
    <location>
        <position position="326"/>
    </location>
    <ligand>
        <name>Ca(2+)</name>
        <dbReference type="ChEBI" id="CHEBI:29108"/>
        <label>3</label>
    </ligand>
</feature>
<feature type="binding site" evidence="1">
    <location>
        <position position="364"/>
    </location>
    <ligand>
        <name>Ca(2+)</name>
        <dbReference type="ChEBI" id="CHEBI:29108"/>
        <label>1</label>
    </ligand>
</feature>
<sequence length="398" mass="45952">MKKKFLKGLCCAFVISITCLGASSKAYGWDGKKDGTGTHSMIVTQAVKVLENDMSKDEPEIVKQNFKILQDNMHKFQLGSTYPDYDPNAYKLFQDHFWDPDTDHNFSKDNLWYLSYSIKDTAESQVRKFTALARNEWEKGNYEKATWYFGQAMHYFGDLNTPYHAANVTAVDSIGHTKYEGFAEKRKDQYRINTTGIKTNEGFYADALKNSNFDSWSKEYCKGWAKQAKNLYYSHSTMKHTNEDWDYSASHALKNAQMGTAGCIYRFLYDVSKDLLPTENHKINGLMVVIKTANEIAAGTDDYVYFGIERKDGTVQEWTLDNPGNDFEANQEDTYILKIKKPSIKFSDINRMWIRKANFTPVSDDWKVKGIKVIADGSVQYEKQINKWIHGNEKYYIN</sequence>
<protein>
    <recommendedName>
        <fullName>Phospholipase C</fullName>
        <shortName>PLC</shortName>
        <ecNumber>3.1.4.3</ecNumber>
    </recommendedName>
    <alternativeName>
        <fullName>Gamma-toxin</fullName>
    </alternativeName>
    <alternativeName>
        <fullName>Phosphatidylcholine cholinephosphohydrolase</fullName>
    </alternativeName>
</protein>
<organism>
    <name type="scientific">Clostridium novyi</name>
    <dbReference type="NCBI Taxonomy" id="1542"/>
    <lineage>
        <taxon>Bacteria</taxon>
        <taxon>Bacillati</taxon>
        <taxon>Bacillota</taxon>
        <taxon>Clostridia</taxon>
        <taxon>Eubacteriales</taxon>
        <taxon>Clostridiaceae</taxon>
        <taxon>Clostridium</taxon>
    </lineage>
</organism>
<accession>Q46150</accession>
<reference key="1">
    <citation type="journal article" date="1995" name="J. Bacteriol.">
        <title>Phylogenetic analysis of phospholipase C genes from Clostridium perfringens types A to E and Clostridium novyi.</title>
        <authorList>
            <person name="Tsutsui K."/>
            <person name="Minami J."/>
            <person name="Matsushita O."/>
            <person name="Katayama S."/>
            <person name="Taniguchi Y."/>
            <person name="Nakamura S."/>
            <person name="Nishioka M."/>
            <person name="Okabe A."/>
        </authorList>
    </citation>
    <scope>NUCLEOTIDE SEQUENCE [GENOMIC DNA]</scope>
    <source>
        <strain>CL49 / Type A</strain>
    </source>
</reference>
<reference key="2">
    <citation type="journal article" date="1975" name="Biochim. Biophys. Acta">
        <title>Phospholipase C from Clostridium novyi type A. I.</title>
        <authorList>
            <person name="Taguchi R."/>
            <person name="Ikezawa H."/>
        </authorList>
    </citation>
    <scope>CHARACTERIZATION</scope>
    <source>
        <strain>IID 140 / Type A</strain>
    </source>
</reference>
<reference key="3">
    <citation type="journal article" date="2000" name="Microbes Infect.">
        <title>Structure and function of clostridial phospholipases C.</title>
        <authorList>
            <person name="Jepson M."/>
            <person name="Titball R.W."/>
        </authorList>
    </citation>
    <scope>REVIEW</scope>
</reference>
<dbReference type="EC" id="3.1.4.3"/>
<dbReference type="EMBL" id="D32125">
    <property type="protein sequence ID" value="BAA06851.1"/>
    <property type="molecule type" value="Genomic_DNA"/>
</dbReference>
<dbReference type="SMR" id="Q46150"/>
<dbReference type="OMA" id="DHFWDPD"/>
<dbReference type="GO" id="GO:0005576">
    <property type="term" value="C:extracellular region"/>
    <property type="evidence" value="ECO:0007669"/>
    <property type="project" value="UniProtKB-SubCell"/>
</dbReference>
<dbReference type="GO" id="GO:0034480">
    <property type="term" value="F:phosphatidylcholine phospholipase C activity"/>
    <property type="evidence" value="ECO:0007669"/>
    <property type="project" value="UniProtKB-EC"/>
</dbReference>
<dbReference type="GO" id="GO:0090729">
    <property type="term" value="F:toxin activity"/>
    <property type="evidence" value="ECO:0007669"/>
    <property type="project" value="UniProtKB-KW"/>
</dbReference>
<dbReference type="GO" id="GO:0008270">
    <property type="term" value="F:zinc ion binding"/>
    <property type="evidence" value="ECO:0007669"/>
    <property type="project" value="InterPro"/>
</dbReference>
<dbReference type="GO" id="GO:0031640">
    <property type="term" value="P:killing of cells of another organism"/>
    <property type="evidence" value="ECO:0007669"/>
    <property type="project" value="UniProtKB-KW"/>
</dbReference>
<dbReference type="CDD" id="cd00113">
    <property type="entry name" value="PLAT"/>
    <property type="match status" value="1"/>
</dbReference>
<dbReference type="CDD" id="cd11009">
    <property type="entry name" value="Zn_dep_PLPC"/>
    <property type="match status" value="1"/>
</dbReference>
<dbReference type="Gene3D" id="1.10.575.10">
    <property type="entry name" value="P1 Nuclease"/>
    <property type="match status" value="1"/>
</dbReference>
<dbReference type="Gene3D" id="2.60.60.20">
    <property type="entry name" value="PLAT/LH2 domain"/>
    <property type="match status" value="1"/>
</dbReference>
<dbReference type="InterPro" id="IPR001024">
    <property type="entry name" value="PLAT/LH2_dom"/>
</dbReference>
<dbReference type="InterPro" id="IPR036392">
    <property type="entry name" value="PLAT/LH2_dom_sf"/>
</dbReference>
<dbReference type="InterPro" id="IPR008947">
    <property type="entry name" value="PLipase_C/P1_nuclease_dom_sf"/>
</dbReference>
<dbReference type="InterPro" id="IPR029002">
    <property type="entry name" value="PLPC/GPLD1"/>
</dbReference>
<dbReference type="InterPro" id="IPR001531">
    <property type="entry name" value="Zn_PLipaseC"/>
</dbReference>
<dbReference type="Pfam" id="PF01477">
    <property type="entry name" value="PLAT"/>
    <property type="match status" value="1"/>
</dbReference>
<dbReference type="Pfam" id="PF00882">
    <property type="entry name" value="Zn_dep_PLPC"/>
    <property type="match status" value="1"/>
</dbReference>
<dbReference type="PRINTS" id="PR00479">
    <property type="entry name" value="PRPHPHLPASEC"/>
</dbReference>
<dbReference type="SMART" id="SM00770">
    <property type="entry name" value="Zn_dep_PLPC"/>
    <property type="match status" value="1"/>
</dbReference>
<dbReference type="SUPFAM" id="SSF49723">
    <property type="entry name" value="Lipase/lipooxygenase domain (PLAT/LH2 domain)"/>
    <property type="match status" value="1"/>
</dbReference>
<dbReference type="SUPFAM" id="SSF48537">
    <property type="entry name" value="Phospholipase C/P1 nuclease"/>
    <property type="match status" value="1"/>
</dbReference>
<dbReference type="PROSITE" id="PS50095">
    <property type="entry name" value="PLAT"/>
    <property type="match status" value="1"/>
</dbReference>
<dbReference type="PROSITE" id="PS00384">
    <property type="entry name" value="PROKAR_ZN_DEPEND_PLPC_1"/>
    <property type="match status" value="1"/>
</dbReference>
<dbReference type="PROSITE" id="PS51346">
    <property type="entry name" value="PROKAR_ZN_DEPEND_PLPC_2"/>
    <property type="match status" value="1"/>
</dbReference>
<proteinExistence type="evidence at protein level"/>